<evidence type="ECO:0000255" key="1">
    <source>
        <dbReference type="HAMAP-Rule" id="MF_00222"/>
    </source>
</evidence>
<dbReference type="EC" id="1.1.1.25" evidence="1"/>
<dbReference type="EMBL" id="AE006468">
    <property type="protein sequence ID" value="AAL22264.1"/>
    <property type="molecule type" value="Genomic_DNA"/>
</dbReference>
<dbReference type="RefSeq" id="NP_462305.1">
    <property type="nucleotide sequence ID" value="NC_003197.2"/>
</dbReference>
<dbReference type="RefSeq" id="WP_000451193.1">
    <property type="nucleotide sequence ID" value="NC_003197.2"/>
</dbReference>
<dbReference type="SMR" id="Q8ZLN1"/>
<dbReference type="STRING" id="99287.STM3401"/>
<dbReference type="PaxDb" id="99287-STM3401"/>
<dbReference type="GeneID" id="1254924"/>
<dbReference type="KEGG" id="stm:STM3401"/>
<dbReference type="PATRIC" id="fig|99287.12.peg.3599"/>
<dbReference type="HOGENOM" id="CLU_044063_2_1_6"/>
<dbReference type="OMA" id="FGNPIKH"/>
<dbReference type="PhylomeDB" id="Q8ZLN1"/>
<dbReference type="BioCyc" id="SENT99287:STM3401-MONOMER"/>
<dbReference type="UniPathway" id="UPA00053">
    <property type="reaction ID" value="UER00087"/>
</dbReference>
<dbReference type="Proteomes" id="UP000001014">
    <property type="component" value="Chromosome"/>
</dbReference>
<dbReference type="GO" id="GO:0005829">
    <property type="term" value="C:cytosol"/>
    <property type="evidence" value="ECO:0000318"/>
    <property type="project" value="GO_Central"/>
</dbReference>
<dbReference type="GO" id="GO:0050661">
    <property type="term" value="F:NADP binding"/>
    <property type="evidence" value="ECO:0000318"/>
    <property type="project" value="GO_Central"/>
</dbReference>
<dbReference type="GO" id="GO:0004764">
    <property type="term" value="F:shikimate 3-dehydrogenase (NADP+) activity"/>
    <property type="evidence" value="ECO:0000318"/>
    <property type="project" value="GO_Central"/>
</dbReference>
<dbReference type="GO" id="GO:0008652">
    <property type="term" value="P:amino acid biosynthetic process"/>
    <property type="evidence" value="ECO:0007669"/>
    <property type="project" value="UniProtKB-KW"/>
</dbReference>
<dbReference type="GO" id="GO:0009073">
    <property type="term" value="P:aromatic amino acid family biosynthetic process"/>
    <property type="evidence" value="ECO:0007669"/>
    <property type="project" value="UniProtKB-KW"/>
</dbReference>
<dbReference type="GO" id="GO:0009423">
    <property type="term" value="P:chorismate biosynthetic process"/>
    <property type="evidence" value="ECO:0000318"/>
    <property type="project" value="GO_Central"/>
</dbReference>
<dbReference type="GO" id="GO:0019632">
    <property type="term" value="P:shikimate metabolic process"/>
    <property type="evidence" value="ECO:0000318"/>
    <property type="project" value="GO_Central"/>
</dbReference>
<dbReference type="CDD" id="cd01065">
    <property type="entry name" value="NAD_bind_Shikimate_DH"/>
    <property type="match status" value="1"/>
</dbReference>
<dbReference type="FunFam" id="3.40.50.10860:FF:000006">
    <property type="entry name" value="Shikimate dehydrogenase (NADP(+))"/>
    <property type="match status" value="1"/>
</dbReference>
<dbReference type="FunFam" id="3.40.50.720:FF:000104">
    <property type="entry name" value="Shikimate dehydrogenase (NADP(+))"/>
    <property type="match status" value="1"/>
</dbReference>
<dbReference type="Gene3D" id="3.40.50.10860">
    <property type="entry name" value="Leucine Dehydrogenase, chain A, domain 1"/>
    <property type="match status" value="1"/>
</dbReference>
<dbReference type="Gene3D" id="3.40.50.720">
    <property type="entry name" value="NAD(P)-binding Rossmann-like Domain"/>
    <property type="match status" value="1"/>
</dbReference>
<dbReference type="HAMAP" id="MF_00222">
    <property type="entry name" value="Shikimate_DH_AroE"/>
    <property type="match status" value="1"/>
</dbReference>
<dbReference type="InterPro" id="IPR046346">
    <property type="entry name" value="Aminoacid_DH-like_N_sf"/>
</dbReference>
<dbReference type="InterPro" id="IPR036291">
    <property type="entry name" value="NAD(P)-bd_dom_sf"/>
</dbReference>
<dbReference type="InterPro" id="IPR041121">
    <property type="entry name" value="SDH_C"/>
</dbReference>
<dbReference type="InterPro" id="IPR011342">
    <property type="entry name" value="Shikimate_DH"/>
</dbReference>
<dbReference type="InterPro" id="IPR013708">
    <property type="entry name" value="Shikimate_DH-bd_N"/>
</dbReference>
<dbReference type="InterPro" id="IPR022893">
    <property type="entry name" value="Shikimate_DH_fam"/>
</dbReference>
<dbReference type="InterPro" id="IPR006151">
    <property type="entry name" value="Shikm_DH/Glu-tRNA_Rdtase"/>
</dbReference>
<dbReference type="NCBIfam" id="TIGR00507">
    <property type="entry name" value="aroE"/>
    <property type="match status" value="1"/>
</dbReference>
<dbReference type="NCBIfam" id="NF001310">
    <property type="entry name" value="PRK00258.1-2"/>
    <property type="match status" value="1"/>
</dbReference>
<dbReference type="PANTHER" id="PTHR21089:SF1">
    <property type="entry name" value="BIFUNCTIONAL 3-DEHYDROQUINATE DEHYDRATASE_SHIKIMATE DEHYDROGENASE, CHLOROPLASTIC"/>
    <property type="match status" value="1"/>
</dbReference>
<dbReference type="PANTHER" id="PTHR21089">
    <property type="entry name" value="SHIKIMATE DEHYDROGENASE"/>
    <property type="match status" value="1"/>
</dbReference>
<dbReference type="Pfam" id="PF18317">
    <property type="entry name" value="SDH_C"/>
    <property type="match status" value="1"/>
</dbReference>
<dbReference type="Pfam" id="PF01488">
    <property type="entry name" value="Shikimate_DH"/>
    <property type="match status" value="1"/>
</dbReference>
<dbReference type="Pfam" id="PF08501">
    <property type="entry name" value="Shikimate_dh_N"/>
    <property type="match status" value="1"/>
</dbReference>
<dbReference type="SUPFAM" id="SSF53223">
    <property type="entry name" value="Aminoacid dehydrogenase-like, N-terminal domain"/>
    <property type="match status" value="1"/>
</dbReference>
<dbReference type="SUPFAM" id="SSF51735">
    <property type="entry name" value="NAD(P)-binding Rossmann-fold domains"/>
    <property type="match status" value="1"/>
</dbReference>
<accession>Q8ZLN1</accession>
<proteinExistence type="inferred from homology"/>
<feature type="chain" id="PRO_0000136029" description="Shikimate dehydrogenase (NADP(+))">
    <location>
        <begin position="1"/>
        <end position="272"/>
    </location>
</feature>
<feature type="active site" description="Proton acceptor" evidence="1">
    <location>
        <position position="65"/>
    </location>
</feature>
<feature type="binding site" evidence="1">
    <location>
        <begin position="14"/>
        <end position="16"/>
    </location>
    <ligand>
        <name>shikimate</name>
        <dbReference type="ChEBI" id="CHEBI:36208"/>
    </ligand>
</feature>
<feature type="binding site" evidence="1">
    <location>
        <position position="61"/>
    </location>
    <ligand>
        <name>shikimate</name>
        <dbReference type="ChEBI" id="CHEBI:36208"/>
    </ligand>
</feature>
<feature type="binding site" evidence="1">
    <location>
        <position position="77"/>
    </location>
    <ligand>
        <name>NADP(+)</name>
        <dbReference type="ChEBI" id="CHEBI:58349"/>
    </ligand>
</feature>
<feature type="binding site" evidence="1">
    <location>
        <position position="86"/>
    </location>
    <ligand>
        <name>shikimate</name>
        <dbReference type="ChEBI" id="CHEBI:36208"/>
    </ligand>
</feature>
<feature type="binding site" evidence="1">
    <location>
        <position position="102"/>
    </location>
    <ligand>
        <name>shikimate</name>
        <dbReference type="ChEBI" id="CHEBI:36208"/>
    </ligand>
</feature>
<feature type="binding site" evidence="1">
    <location>
        <begin position="126"/>
        <end position="130"/>
    </location>
    <ligand>
        <name>NADP(+)</name>
        <dbReference type="ChEBI" id="CHEBI:58349"/>
    </ligand>
</feature>
<feature type="binding site" evidence="1">
    <location>
        <begin position="149"/>
        <end position="154"/>
    </location>
    <ligand>
        <name>NADP(+)</name>
        <dbReference type="ChEBI" id="CHEBI:58349"/>
    </ligand>
</feature>
<feature type="binding site" evidence="1">
    <location>
        <position position="213"/>
    </location>
    <ligand>
        <name>NADP(+)</name>
        <dbReference type="ChEBI" id="CHEBI:58349"/>
    </ligand>
</feature>
<feature type="binding site" evidence="1">
    <location>
        <position position="215"/>
    </location>
    <ligand>
        <name>shikimate</name>
        <dbReference type="ChEBI" id="CHEBI:36208"/>
    </ligand>
</feature>
<feature type="binding site" evidence="1">
    <location>
        <position position="237"/>
    </location>
    <ligand>
        <name>NADP(+)</name>
        <dbReference type="ChEBI" id="CHEBI:58349"/>
    </ligand>
</feature>
<sequence>METYAVFGNPIAHSKSPFIHQQFAQQLDIVHPYGRVLAPINNFINTLDAFFAAGGKGANITVPFKEEAFARSDELTERASLAGAVNTLKRLEDGRLLGDNTDGIGLLGDLERLNFIRPGLRILLIGAGGASRGVLLPLLSLDCAVTITNRTASRAEALAKIFAHTGSVHATDMDKLDGCEFDLIINATSSGIRGEIPAIPASLIHPSLCCYDMFYQKGNTPFLSWCVQQGAKRYADGLGMLVGQAAHAVLLWHGVLPQVEPVIEQLQQELLA</sequence>
<organism>
    <name type="scientific">Salmonella typhimurium (strain LT2 / SGSC1412 / ATCC 700720)</name>
    <dbReference type="NCBI Taxonomy" id="99287"/>
    <lineage>
        <taxon>Bacteria</taxon>
        <taxon>Pseudomonadati</taxon>
        <taxon>Pseudomonadota</taxon>
        <taxon>Gammaproteobacteria</taxon>
        <taxon>Enterobacterales</taxon>
        <taxon>Enterobacteriaceae</taxon>
        <taxon>Salmonella</taxon>
    </lineage>
</organism>
<gene>
    <name evidence="1" type="primary">aroE</name>
    <name type="ordered locus">STM3401</name>
</gene>
<comment type="function">
    <text evidence="1">Involved in the biosynthesis of the chorismate, which leads to the biosynthesis of aromatic amino acids. Catalyzes the reversible NADPH linked reduction of 3-dehydroshikimate (DHSA) to yield shikimate (SA).</text>
</comment>
<comment type="catalytic activity">
    <reaction evidence="1">
        <text>shikimate + NADP(+) = 3-dehydroshikimate + NADPH + H(+)</text>
        <dbReference type="Rhea" id="RHEA:17737"/>
        <dbReference type="ChEBI" id="CHEBI:15378"/>
        <dbReference type="ChEBI" id="CHEBI:16630"/>
        <dbReference type="ChEBI" id="CHEBI:36208"/>
        <dbReference type="ChEBI" id="CHEBI:57783"/>
        <dbReference type="ChEBI" id="CHEBI:58349"/>
        <dbReference type="EC" id="1.1.1.25"/>
    </reaction>
</comment>
<comment type="pathway">
    <text evidence="1">Metabolic intermediate biosynthesis; chorismate biosynthesis; chorismate from D-erythrose 4-phosphate and phosphoenolpyruvate: step 4/7.</text>
</comment>
<comment type="subunit">
    <text evidence="1">Homodimer.</text>
</comment>
<comment type="similarity">
    <text evidence="1">Belongs to the shikimate dehydrogenase family.</text>
</comment>
<reference key="1">
    <citation type="journal article" date="2001" name="Nature">
        <title>Complete genome sequence of Salmonella enterica serovar Typhimurium LT2.</title>
        <authorList>
            <person name="McClelland M."/>
            <person name="Sanderson K.E."/>
            <person name="Spieth J."/>
            <person name="Clifton S.W."/>
            <person name="Latreille P."/>
            <person name="Courtney L."/>
            <person name="Porwollik S."/>
            <person name="Ali J."/>
            <person name="Dante M."/>
            <person name="Du F."/>
            <person name="Hou S."/>
            <person name="Layman D."/>
            <person name="Leonard S."/>
            <person name="Nguyen C."/>
            <person name="Scott K."/>
            <person name="Holmes A."/>
            <person name="Grewal N."/>
            <person name="Mulvaney E."/>
            <person name="Ryan E."/>
            <person name="Sun H."/>
            <person name="Florea L."/>
            <person name="Miller W."/>
            <person name="Stoneking T."/>
            <person name="Nhan M."/>
            <person name="Waterston R."/>
            <person name="Wilson R.K."/>
        </authorList>
    </citation>
    <scope>NUCLEOTIDE SEQUENCE [LARGE SCALE GENOMIC DNA]</scope>
    <source>
        <strain>LT2 / SGSC1412 / ATCC 700720</strain>
    </source>
</reference>
<protein>
    <recommendedName>
        <fullName evidence="1">Shikimate dehydrogenase (NADP(+))</fullName>
        <shortName evidence="1">SDH</shortName>
        <ecNumber evidence="1">1.1.1.25</ecNumber>
    </recommendedName>
</protein>
<keyword id="KW-0028">Amino-acid biosynthesis</keyword>
<keyword id="KW-0057">Aromatic amino acid biosynthesis</keyword>
<keyword id="KW-0521">NADP</keyword>
<keyword id="KW-0560">Oxidoreductase</keyword>
<keyword id="KW-1185">Reference proteome</keyword>
<name>AROE_SALTY</name>